<dbReference type="EC" id="4.2.1.19" evidence="1"/>
<dbReference type="EMBL" id="BX569689">
    <property type="protein sequence ID" value="CAE06741.1"/>
    <property type="molecule type" value="Genomic_DNA"/>
</dbReference>
<dbReference type="RefSeq" id="WP_011127102.1">
    <property type="nucleotide sequence ID" value="NC_005070.1"/>
</dbReference>
<dbReference type="SMR" id="Q7U9M8"/>
<dbReference type="STRING" id="84588.SYNW0226"/>
<dbReference type="KEGG" id="syw:SYNW0226"/>
<dbReference type="eggNOG" id="COG0131">
    <property type="taxonomic scope" value="Bacteria"/>
</dbReference>
<dbReference type="HOGENOM" id="CLU_044308_3_0_3"/>
<dbReference type="UniPathway" id="UPA00031">
    <property type="reaction ID" value="UER00011"/>
</dbReference>
<dbReference type="Proteomes" id="UP000001422">
    <property type="component" value="Chromosome"/>
</dbReference>
<dbReference type="GO" id="GO:0005737">
    <property type="term" value="C:cytoplasm"/>
    <property type="evidence" value="ECO:0007669"/>
    <property type="project" value="UniProtKB-SubCell"/>
</dbReference>
<dbReference type="GO" id="GO:0004424">
    <property type="term" value="F:imidazoleglycerol-phosphate dehydratase activity"/>
    <property type="evidence" value="ECO:0007669"/>
    <property type="project" value="UniProtKB-UniRule"/>
</dbReference>
<dbReference type="GO" id="GO:0000105">
    <property type="term" value="P:L-histidine biosynthetic process"/>
    <property type="evidence" value="ECO:0007669"/>
    <property type="project" value="UniProtKB-UniRule"/>
</dbReference>
<dbReference type="CDD" id="cd07914">
    <property type="entry name" value="IGPD"/>
    <property type="match status" value="1"/>
</dbReference>
<dbReference type="FunFam" id="3.30.230.40:FF:000002">
    <property type="entry name" value="Imidazoleglycerol-phosphate dehydratase"/>
    <property type="match status" value="1"/>
</dbReference>
<dbReference type="FunFam" id="3.30.230.40:FF:000003">
    <property type="entry name" value="Imidazoleglycerol-phosphate dehydratase HisB"/>
    <property type="match status" value="1"/>
</dbReference>
<dbReference type="Gene3D" id="3.30.230.40">
    <property type="entry name" value="Imidazole glycerol phosphate dehydratase, domain 1"/>
    <property type="match status" value="2"/>
</dbReference>
<dbReference type="HAMAP" id="MF_00076">
    <property type="entry name" value="HisB"/>
    <property type="match status" value="1"/>
</dbReference>
<dbReference type="InterPro" id="IPR038494">
    <property type="entry name" value="IGPD_sf"/>
</dbReference>
<dbReference type="InterPro" id="IPR000807">
    <property type="entry name" value="ImidazoleglycerolP_deHydtase"/>
</dbReference>
<dbReference type="InterPro" id="IPR020565">
    <property type="entry name" value="ImidazoleglycerP_deHydtase_CS"/>
</dbReference>
<dbReference type="InterPro" id="IPR020568">
    <property type="entry name" value="Ribosomal_Su5_D2-typ_SF"/>
</dbReference>
<dbReference type="NCBIfam" id="NF002108">
    <property type="entry name" value="PRK00951.1-3"/>
    <property type="match status" value="1"/>
</dbReference>
<dbReference type="NCBIfam" id="NF002109">
    <property type="entry name" value="PRK00951.1-5"/>
    <property type="match status" value="1"/>
</dbReference>
<dbReference type="NCBIfam" id="NF002111">
    <property type="entry name" value="PRK00951.2-1"/>
    <property type="match status" value="1"/>
</dbReference>
<dbReference type="NCBIfam" id="NF002114">
    <property type="entry name" value="PRK00951.2-4"/>
    <property type="match status" value="1"/>
</dbReference>
<dbReference type="PANTHER" id="PTHR23133:SF2">
    <property type="entry name" value="IMIDAZOLEGLYCEROL-PHOSPHATE DEHYDRATASE"/>
    <property type="match status" value="1"/>
</dbReference>
<dbReference type="PANTHER" id="PTHR23133">
    <property type="entry name" value="IMIDAZOLEGLYCEROL-PHOSPHATE DEHYDRATASE HIS7"/>
    <property type="match status" value="1"/>
</dbReference>
<dbReference type="Pfam" id="PF00475">
    <property type="entry name" value="IGPD"/>
    <property type="match status" value="1"/>
</dbReference>
<dbReference type="SUPFAM" id="SSF54211">
    <property type="entry name" value="Ribosomal protein S5 domain 2-like"/>
    <property type="match status" value="2"/>
</dbReference>
<dbReference type="PROSITE" id="PS00954">
    <property type="entry name" value="IGP_DEHYDRATASE_1"/>
    <property type="match status" value="1"/>
</dbReference>
<dbReference type="PROSITE" id="PS00955">
    <property type="entry name" value="IGP_DEHYDRATASE_2"/>
    <property type="match status" value="1"/>
</dbReference>
<reference key="1">
    <citation type="journal article" date="2003" name="Nature">
        <title>The genome of a motile marine Synechococcus.</title>
        <authorList>
            <person name="Palenik B."/>
            <person name="Brahamsha B."/>
            <person name="Larimer F.W."/>
            <person name="Land M.L."/>
            <person name="Hauser L."/>
            <person name="Chain P."/>
            <person name="Lamerdin J.E."/>
            <person name="Regala W."/>
            <person name="Allen E.E."/>
            <person name="McCarren J."/>
            <person name="Paulsen I.T."/>
            <person name="Dufresne A."/>
            <person name="Partensky F."/>
            <person name="Webb E.A."/>
            <person name="Waterbury J."/>
        </authorList>
    </citation>
    <scope>NUCLEOTIDE SEQUENCE [LARGE SCALE GENOMIC DNA]</scope>
    <source>
        <strain>WH8102</strain>
    </source>
</reference>
<sequence>MARQGDIHRVTGETDVKVRLDLDGSGQCQASTGVPFLDHMLHQISSHGLIDLEINAVGDTHIDDHHTNEDVGIAVGQALAQALGDRRGIHRFGHFAAPLDEALVQVALDCSGRPHLSYSLSIPSQKIGSYDTELVKEFFVAVVNNSGLTLHIRQLDGVNSHHIVEACFKAFSRALRMATEIDPRRAGAIPSSKGVLEQAGAN</sequence>
<organism>
    <name type="scientific">Parasynechococcus marenigrum (strain WH8102)</name>
    <dbReference type="NCBI Taxonomy" id="84588"/>
    <lineage>
        <taxon>Bacteria</taxon>
        <taxon>Bacillati</taxon>
        <taxon>Cyanobacteriota</taxon>
        <taxon>Cyanophyceae</taxon>
        <taxon>Synechococcales</taxon>
        <taxon>Prochlorococcaceae</taxon>
        <taxon>Parasynechococcus</taxon>
        <taxon>Parasynechococcus marenigrum</taxon>
    </lineage>
</organism>
<keyword id="KW-0028">Amino-acid biosynthesis</keyword>
<keyword id="KW-0963">Cytoplasm</keyword>
<keyword id="KW-0368">Histidine biosynthesis</keyword>
<keyword id="KW-0456">Lyase</keyword>
<accession>Q7U9M8</accession>
<name>HIS7_PARMW</name>
<feature type="chain" id="PRO_0000158178" description="Imidazoleglycerol-phosphate dehydratase">
    <location>
        <begin position="1"/>
        <end position="202"/>
    </location>
</feature>
<protein>
    <recommendedName>
        <fullName evidence="1">Imidazoleglycerol-phosphate dehydratase</fullName>
        <shortName evidence="1">IGPD</shortName>
        <ecNumber evidence="1">4.2.1.19</ecNumber>
    </recommendedName>
</protein>
<proteinExistence type="inferred from homology"/>
<gene>
    <name evidence="1" type="primary">hisB</name>
    <name type="ordered locus">SYNW0226</name>
</gene>
<comment type="catalytic activity">
    <reaction evidence="1">
        <text>D-erythro-1-(imidazol-4-yl)glycerol 3-phosphate = 3-(imidazol-4-yl)-2-oxopropyl phosphate + H2O</text>
        <dbReference type="Rhea" id="RHEA:11040"/>
        <dbReference type="ChEBI" id="CHEBI:15377"/>
        <dbReference type="ChEBI" id="CHEBI:57766"/>
        <dbReference type="ChEBI" id="CHEBI:58278"/>
        <dbReference type="EC" id="4.2.1.19"/>
    </reaction>
</comment>
<comment type="pathway">
    <text evidence="1">Amino-acid biosynthesis; L-histidine biosynthesis; L-histidine from 5-phospho-alpha-D-ribose 1-diphosphate: step 6/9.</text>
</comment>
<comment type="subcellular location">
    <subcellularLocation>
        <location evidence="1">Cytoplasm</location>
    </subcellularLocation>
</comment>
<comment type="similarity">
    <text evidence="1">Belongs to the imidazoleglycerol-phosphate dehydratase family.</text>
</comment>
<evidence type="ECO:0000255" key="1">
    <source>
        <dbReference type="HAMAP-Rule" id="MF_00076"/>
    </source>
</evidence>